<accession>B5EEV8</accession>
<feature type="chain" id="PRO_0000380993" description="8-amino-7-oxononanoate synthase">
    <location>
        <begin position="1"/>
        <end position="389"/>
    </location>
</feature>
<feature type="binding site" evidence="1">
    <location>
        <position position="18"/>
    </location>
    <ligand>
        <name>substrate</name>
    </ligand>
</feature>
<feature type="binding site" evidence="1">
    <location>
        <begin position="104"/>
        <end position="105"/>
    </location>
    <ligand>
        <name>pyridoxal 5'-phosphate</name>
        <dbReference type="ChEBI" id="CHEBI:597326"/>
    </ligand>
</feature>
<feature type="binding site" evidence="1">
    <location>
        <position position="129"/>
    </location>
    <ligand>
        <name>substrate</name>
    </ligand>
</feature>
<feature type="binding site" evidence="1">
    <location>
        <position position="176"/>
    </location>
    <ligand>
        <name>pyridoxal 5'-phosphate</name>
        <dbReference type="ChEBI" id="CHEBI:597326"/>
    </ligand>
</feature>
<feature type="binding site" evidence="1">
    <location>
        <position position="204"/>
    </location>
    <ligand>
        <name>pyridoxal 5'-phosphate</name>
        <dbReference type="ChEBI" id="CHEBI:597326"/>
    </ligand>
</feature>
<feature type="binding site" evidence="1">
    <location>
        <position position="232"/>
    </location>
    <ligand>
        <name>pyridoxal 5'-phosphate</name>
        <dbReference type="ChEBI" id="CHEBI:597326"/>
    </ligand>
</feature>
<feature type="binding site" evidence="1">
    <location>
        <position position="351"/>
    </location>
    <ligand>
        <name>substrate</name>
    </ligand>
</feature>
<feature type="modified residue" description="N6-(pyridoxal phosphate)lysine" evidence="1">
    <location>
        <position position="235"/>
    </location>
</feature>
<dbReference type="EC" id="2.3.1.47" evidence="1"/>
<dbReference type="EMBL" id="CP001124">
    <property type="protein sequence ID" value="ACH37854.1"/>
    <property type="molecule type" value="Genomic_DNA"/>
</dbReference>
<dbReference type="RefSeq" id="WP_012529265.1">
    <property type="nucleotide sequence ID" value="NC_011146.1"/>
</dbReference>
<dbReference type="SMR" id="B5EEV8"/>
<dbReference type="STRING" id="404380.Gbem_0831"/>
<dbReference type="KEGG" id="gbm:Gbem_0831"/>
<dbReference type="eggNOG" id="COG0156">
    <property type="taxonomic scope" value="Bacteria"/>
</dbReference>
<dbReference type="HOGENOM" id="CLU_015846_11_0_7"/>
<dbReference type="OrthoDB" id="9807157at2"/>
<dbReference type="UniPathway" id="UPA00078"/>
<dbReference type="Proteomes" id="UP000008825">
    <property type="component" value="Chromosome"/>
</dbReference>
<dbReference type="GO" id="GO:0008710">
    <property type="term" value="F:8-amino-7-oxononanoate synthase activity"/>
    <property type="evidence" value="ECO:0007669"/>
    <property type="project" value="UniProtKB-EC"/>
</dbReference>
<dbReference type="GO" id="GO:0030170">
    <property type="term" value="F:pyridoxal phosphate binding"/>
    <property type="evidence" value="ECO:0007669"/>
    <property type="project" value="InterPro"/>
</dbReference>
<dbReference type="GO" id="GO:0009102">
    <property type="term" value="P:biotin biosynthetic process"/>
    <property type="evidence" value="ECO:0007669"/>
    <property type="project" value="UniProtKB-UniPathway"/>
</dbReference>
<dbReference type="CDD" id="cd06454">
    <property type="entry name" value="KBL_like"/>
    <property type="match status" value="1"/>
</dbReference>
<dbReference type="FunFam" id="3.40.640.10:FF:000006">
    <property type="entry name" value="5-aminolevulinate synthase, mitochondrial"/>
    <property type="match status" value="1"/>
</dbReference>
<dbReference type="Gene3D" id="3.90.1150.10">
    <property type="entry name" value="Aspartate Aminotransferase, domain 1"/>
    <property type="match status" value="1"/>
</dbReference>
<dbReference type="Gene3D" id="3.40.640.10">
    <property type="entry name" value="Type I PLP-dependent aspartate aminotransferase-like (Major domain)"/>
    <property type="match status" value="1"/>
</dbReference>
<dbReference type="HAMAP" id="MF_01693">
    <property type="entry name" value="BioF_aminotrans_2"/>
    <property type="match status" value="1"/>
</dbReference>
<dbReference type="InterPro" id="IPR001917">
    <property type="entry name" value="Aminotrans_II_pyridoxalP_BS"/>
</dbReference>
<dbReference type="InterPro" id="IPR004839">
    <property type="entry name" value="Aminotransferase_I/II_large"/>
</dbReference>
<dbReference type="InterPro" id="IPR050087">
    <property type="entry name" value="AON_synthase_class-II"/>
</dbReference>
<dbReference type="InterPro" id="IPR004723">
    <property type="entry name" value="AONS_Archaea/Proteobacteria"/>
</dbReference>
<dbReference type="InterPro" id="IPR022834">
    <property type="entry name" value="AONS_Proteobacteria"/>
</dbReference>
<dbReference type="InterPro" id="IPR015424">
    <property type="entry name" value="PyrdxlP-dep_Trfase"/>
</dbReference>
<dbReference type="InterPro" id="IPR015421">
    <property type="entry name" value="PyrdxlP-dep_Trfase_major"/>
</dbReference>
<dbReference type="InterPro" id="IPR015422">
    <property type="entry name" value="PyrdxlP-dep_Trfase_small"/>
</dbReference>
<dbReference type="NCBIfam" id="TIGR00858">
    <property type="entry name" value="bioF"/>
    <property type="match status" value="1"/>
</dbReference>
<dbReference type="PANTHER" id="PTHR13693:SF100">
    <property type="entry name" value="8-AMINO-7-OXONONANOATE SYNTHASE"/>
    <property type="match status" value="1"/>
</dbReference>
<dbReference type="PANTHER" id="PTHR13693">
    <property type="entry name" value="CLASS II AMINOTRANSFERASE/8-AMINO-7-OXONONANOATE SYNTHASE"/>
    <property type="match status" value="1"/>
</dbReference>
<dbReference type="Pfam" id="PF00155">
    <property type="entry name" value="Aminotran_1_2"/>
    <property type="match status" value="1"/>
</dbReference>
<dbReference type="SUPFAM" id="SSF53383">
    <property type="entry name" value="PLP-dependent transferases"/>
    <property type="match status" value="1"/>
</dbReference>
<dbReference type="PROSITE" id="PS00599">
    <property type="entry name" value="AA_TRANSFER_CLASS_2"/>
    <property type="match status" value="1"/>
</dbReference>
<organism>
    <name type="scientific">Citrifermentans bemidjiense (strain ATCC BAA-1014 / DSM 16622 / JCM 12645 / Bem)</name>
    <name type="common">Geobacter bemidjiensis</name>
    <dbReference type="NCBI Taxonomy" id="404380"/>
    <lineage>
        <taxon>Bacteria</taxon>
        <taxon>Pseudomonadati</taxon>
        <taxon>Thermodesulfobacteriota</taxon>
        <taxon>Desulfuromonadia</taxon>
        <taxon>Geobacterales</taxon>
        <taxon>Geobacteraceae</taxon>
        <taxon>Citrifermentans</taxon>
    </lineage>
</organism>
<reference key="1">
    <citation type="submission" date="2008-07" db="EMBL/GenBank/DDBJ databases">
        <title>Complete sequence of Geobacter bemidjiensis BEM.</title>
        <authorList>
            <consortium name="US DOE Joint Genome Institute"/>
            <person name="Lucas S."/>
            <person name="Copeland A."/>
            <person name="Lapidus A."/>
            <person name="Glavina del Rio T."/>
            <person name="Dalin E."/>
            <person name="Tice H."/>
            <person name="Bruce D."/>
            <person name="Goodwin L."/>
            <person name="Pitluck S."/>
            <person name="Kiss H."/>
            <person name="Brettin T."/>
            <person name="Detter J.C."/>
            <person name="Han C."/>
            <person name="Kuske C.R."/>
            <person name="Schmutz J."/>
            <person name="Larimer F."/>
            <person name="Land M."/>
            <person name="Hauser L."/>
            <person name="Kyrpides N."/>
            <person name="Lykidis A."/>
            <person name="Lovley D."/>
            <person name="Richardson P."/>
        </authorList>
    </citation>
    <scope>NUCLEOTIDE SEQUENCE [LARGE SCALE GENOMIC DNA]</scope>
    <source>
        <strain>ATCC BAA-1014 / DSM 16622 / JCM 12645 / Bem</strain>
    </source>
</reference>
<comment type="function">
    <text evidence="1">Catalyzes the decarboxylative condensation of pimeloyl-[acyl-carrier protein] and L-alanine to produce 8-amino-7-oxononanoate (AON), [acyl-carrier protein], and carbon dioxide.</text>
</comment>
<comment type="catalytic activity">
    <reaction evidence="1">
        <text>6-carboxyhexanoyl-[ACP] + L-alanine + H(+) = (8S)-8-amino-7-oxononanoate + holo-[ACP] + CO2</text>
        <dbReference type="Rhea" id="RHEA:42288"/>
        <dbReference type="Rhea" id="RHEA-COMP:9685"/>
        <dbReference type="Rhea" id="RHEA-COMP:9955"/>
        <dbReference type="ChEBI" id="CHEBI:15378"/>
        <dbReference type="ChEBI" id="CHEBI:16526"/>
        <dbReference type="ChEBI" id="CHEBI:57972"/>
        <dbReference type="ChEBI" id="CHEBI:64479"/>
        <dbReference type="ChEBI" id="CHEBI:78846"/>
        <dbReference type="ChEBI" id="CHEBI:149468"/>
        <dbReference type="EC" id="2.3.1.47"/>
    </reaction>
</comment>
<comment type="cofactor">
    <cofactor evidence="1">
        <name>pyridoxal 5'-phosphate</name>
        <dbReference type="ChEBI" id="CHEBI:597326"/>
    </cofactor>
</comment>
<comment type="pathway">
    <text evidence="1">Cofactor biosynthesis; biotin biosynthesis.</text>
</comment>
<comment type="subunit">
    <text evidence="1">Homodimer.</text>
</comment>
<comment type="similarity">
    <text evidence="1">Belongs to the class-II pyridoxal-phosphate-dependent aminotransferase family. BioF subfamily.</text>
</comment>
<protein>
    <recommendedName>
        <fullName evidence="1">8-amino-7-oxononanoate synthase</fullName>
        <shortName evidence="1">AONS</shortName>
        <ecNumber evidence="1">2.3.1.47</ecNumber>
    </recommendedName>
    <alternativeName>
        <fullName evidence="1">7-keto-8-amino-pelargonic acid synthase</fullName>
        <shortName evidence="1">7-KAP synthase</shortName>
        <shortName evidence="1">KAPA synthase</shortName>
    </alternativeName>
    <alternativeName>
        <fullName evidence="1">8-amino-7-ketopelargonate synthase</fullName>
    </alternativeName>
</protein>
<gene>
    <name evidence="1" type="primary">bioF</name>
    <name type="ordered locus">Gbem_0831</name>
</gene>
<sequence>MQTFAEELEALRAEGLYRSMRVIKGAQGSRVELDGKQVLMLCSNNYLGLADHPELRSAAVFGVAFGVGSGASRLVSGTMELHEKLEERIAAFKGTEKALVFNSGYAANTGIVSALVGRGDAIFSDRLNHASIIDGALLSRADLHRYPHRDMAALERLLQDKGGNGRRLIVTDGVFSMDGDIAPLQDLVRLAKKYGALLMVDDAHGTGVLGPTGRGSGELLGVMDGIDIHMGTLGKGLGSFGAYAAASATICDYLVNKARSFIFSTSLPPAVLAASIAAIELVDSPEGKELREKLAANVALFKEKLAQAGFDTMGSETQIVPIFVGPADATMEFSKVLLEQGIFVQGIRPPTVPSGSCRLRCTIMATHEPAELEEAAGIIEQVGKKLGVV</sequence>
<name>BIOF_CITBB</name>
<proteinExistence type="inferred from homology"/>
<keyword id="KW-0093">Biotin biosynthesis</keyword>
<keyword id="KW-0663">Pyridoxal phosphate</keyword>
<keyword id="KW-1185">Reference proteome</keyword>
<keyword id="KW-0808">Transferase</keyword>
<evidence type="ECO:0000255" key="1">
    <source>
        <dbReference type="HAMAP-Rule" id="MF_01693"/>
    </source>
</evidence>